<reference key="1">
    <citation type="journal article" date="2007" name="Genome Biol.">
        <title>Characterization and modeling of the Haemophilus influenzae core and supragenomes based on the complete genomic sequences of Rd and 12 clinical nontypeable strains.</title>
        <authorList>
            <person name="Hogg J.S."/>
            <person name="Hu F.Z."/>
            <person name="Janto B."/>
            <person name="Boissy R."/>
            <person name="Hayes J."/>
            <person name="Keefe R."/>
            <person name="Post J.C."/>
            <person name="Ehrlich G.D."/>
        </authorList>
    </citation>
    <scope>NUCLEOTIDE SEQUENCE [LARGE SCALE GENOMIC DNA]</scope>
    <source>
        <strain>PittEE</strain>
    </source>
</reference>
<sequence length="502" mass="57004">MSEQEVKELDLNGEMLVRREKLSALRAKGNAFPNKFRRDALAQDLHNQYDSEDGEILKEKGVEVQVAGRIMTRRAMGKATFITIQDMSGKIQLYVARDNLPEGVYAEDVGNWDLGDIIGVKGTLFKTKTNELTIKTTEVQLLTKALRPLPDKFHGLTDQEVRYRQRYLDLISNEESRRTFIIRSKVVAGIREYFISKGFMEVETPMLQVIPGGASARPFVTHHNALDVDMYLRIAPELYLKRLVVGGFERVFELNRNFRNEGVSVRHNPEFTMLEYYQAYADYHDLMDNTEELLRKLAIDILGTTIVKYGDLEFDFGKPFERITLHDATVKYGADKGIVKEDLYDFDRAKATAERLGIEVQKSWGLGSIVNAIFEEVAEHHLIQPTFLMAHPAEISPLARRNDENPEVTDRFELFIGGREIGNGFSELNDAEDQNERFDAQVAAKEAGDDEAMFKDEDFVVALEHGLPPTAGEGLGIDRLAMLYANAPSIRDVILFPAMRQK</sequence>
<comment type="catalytic activity">
    <reaction evidence="1">
        <text>tRNA(Lys) + L-lysine + ATP = L-lysyl-tRNA(Lys) + AMP + diphosphate</text>
        <dbReference type="Rhea" id="RHEA:20792"/>
        <dbReference type="Rhea" id="RHEA-COMP:9696"/>
        <dbReference type="Rhea" id="RHEA-COMP:9697"/>
        <dbReference type="ChEBI" id="CHEBI:30616"/>
        <dbReference type="ChEBI" id="CHEBI:32551"/>
        <dbReference type="ChEBI" id="CHEBI:33019"/>
        <dbReference type="ChEBI" id="CHEBI:78442"/>
        <dbReference type="ChEBI" id="CHEBI:78529"/>
        <dbReference type="ChEBI" id="CHEBI:456215"/>
        <dbReference type="EC" id="6.1.1.6"/>
    </reaction>
</comment>
<comment type="cofactor">
    <cofactor evidence="1">
        <name>Mg(2+)</name>
        <dbReference type="ChEBI" id="CHEBI:18420"/>
    </cofactor>
    <text evidence="1">Binds 3 Mg(2+) ions per subunit.</text>
</comment>
<comment type="subunit">
    <text evidence="1">Homodimer.</text>
</comment>
<comment type="subcellular location">
    <subcellularLocation>
        <location evidence="1">Cytoplasm</location>
    </subcellularLocation>
</comment>
<comment type="similarity">
    <text evidence="1">Belongs to the class-II aminoacyl-tRNA synthetase family.</text>
</comment>
<evidence type="ECO:0000255" key="1">
    <source>
        <dbReference type="HAMAP-Rule" id="MF_00252"/>
    </source>
</evidence>
<dbReference type="EC" id="6.1.1.6" evidence="1"/>
<dbReference type="EMBL" id="CP000671">
    <property type="protein sequence ID" value="ABQ98551.1"/>
    <property type="molecule type" value="Genomic_DNA"/>
</dbReference>
<dbReference type="SMR" id="A5UCQ0"/>
<dbReference type="KEGG" id="hip:CGSHiEE_05980"/>
<dbReference type="HOGENOM" id="CLU_008255_6_0_6"/>
<dbReference type="GO" id="GO:0005829">
    <property type="term" value="C:cytosol"/>
    <property type="evidence" value="ECO:0007669"/>
    <property type="project" value="TreeGrafter"/>
</dbReference>
<dbReference type="GO" id="GO:0005524">
    <property type="term" value="F:ATP binding"/>
    <property type="evidence" value="ECO:0007669"/>
    <property type="project" value="UniProtKB-UniRule"/>
</dbReference>
<dbReference type="GO" id="GO:0004824">
    <property type="term" value="F:lysine-tRNA ligase activity"/>
    <property type="evidence" value="ECO:0007669"/>
    <property type="project" value="UniProtKB-UniRule"/>
</dbReference>
<dbReference type="GO" id="GO:0000287">
    <property type="term" value="F:magnesium ion binding"/>
    <property type="evidence" value="ECO:0007669"/>
    <property type="project" value="UniProtKB-UniRule"/>
</dbReference>
<dbReference type="GO" id="GO:0000049">
    <property type="term" value="F:tRNA binding"/>
    <property type="evidence" value="ECO:0007669"/>
    <property type="project" value="TreeGrafter"/>
</dbReference>
<dbReference type="GO" id="GO:0006430">
    <property type="term" value="P:lysyl-tRNA aminoacylation"/>
    <property type="evidence" value="ECO:0007669"/>
    <property type="project" value="UniProtKB-UniRule"/>
</dbReference>
<dbReference type="CDD" id="cd00775">
    <property type="entry name" value="LysRS_core"/>
    <property type="match status" value="1"/>
</dbReference>
<dbReference type="CDD" id="cd04322">
    <property type="entry name" value="LysRS_N"/>
    <property type="match status" value="1"/>
</dbReference>
<dbReference type="FunFam" id="2.40.50.140:FF:000024">
    <property type="entry name" value="Lysine--tRNA ligase"/>
    <property type="match status" value="1"/>
</dbReference>
<dbReference type="FunFam" id="3.30.930.10:FF:000001">
    <property type="entry name" value="Lysine--tRNA ligase"/>
    <property type="match status" value="1"/>
</dbReference>
<dbReference type="Gene3D" id="3.30.930.10">
    <property type="entry name" value="Bira Bifunctional Protein, Domain 2"/>
    <property type="match status" value="1"/>
</dbReference>
<dbReference type="Gene3D" id="2.40.50.140">
    <property type="entry name" value="Nucleic acid-binding proteins"/>
    <property type="match status" value="1"/>
</dbReference>
<dbReference type="HAMAP" id="MF_00252">
    <property type="entry name" value="Lys_tRNA_synth_class2"/>
    <property type="match status" value="1"/>
</dbReference>
<dbReference type="InterPro" id="IPR004364">
    <property type="entry name" value="Aa-tRNA-synt_II"/>
</dbReference>
<dbReference type="InterPro" id="IPR006195">
    <property type="entry name" value="aa-tRNA-synth_II"/>
</dbReference>
<dbReference type="InterPro" id="IPR045864">
    <property type="entry name" value="aa-tRNA-synth_II/BPL/LPL"/>
</dbReference>
<dbReference type="InterPro" id="IPR002313">
    <property type="entry name" value="Lys-tRNA-ligase_II"/>
</dbReference>
<dbReference type="InterPro" id="IPR034762">
    <property type="entry name" value="Lys-tRNA-ligase_II_bac/euk"/>
</dbReference>
<dbReference type="InterPro" id="IPR044136">
    <property type="entry name" value="Lys-tRNA-ligase_II_N"/>
</dbReference>
<dbReference type="InterPro" id="IPR018149">
    <property type="entry name" value="Lys-tRNA-synth_II_C"/>
</dbReference>
<dbReference type="InterPro" id="IPR012340">
    <property type="entry name" value="NA-bd_OB-fold"/>
</dbReference>
<dbReference type="InterPro" id="IPR004365">
    <property type="entry name" value="NA-bd_OB_tRNA"/>
</dbReference>
<dbReference type="NCBIfam" id="TIGR00499">
    <property type="entry name" value="lysS_bact"/>
    <property type="match status" value="1"/>
</dbReference>
<dbReference type="NCBIfam" id="NF001756">
    <property type="entry name" value="PRK00484.1"/>
    <property type="match status" value="1"/>
</dbReference>
<dbReference type="PANTHER" id="PTHR42918:SF15">
    <property type="entry name" value="LYSINE--TRNA LIGASE, CHLOROPLASTIC_MITOCHONDRIAL"/>
    <property type="match status" value="1"/>
</dbReference>
<dbReference type="PANTHER" id="PTHR42918">
    <property type="entry name" value="LYSYL-TRNA SYNTHETASE"/>
    <property type="match status" value="1"/>
</dbReference>
<dbReference type="Pfam" id="PF00152">
    <property type="entry name" value="tRNA-synt_2"/>
    <property type="match status" value="1"/>
</dbReference>
<dbReference type="Pfam" id="PF01336">
    <property type="entry name" value="tRNA_anti-codon"/>
    <property type="match status" value="1"/>
</dbReference>
<dbReference type="PIRSF" id="PIRSF039101">
    <property type="entry name" value="LysRS2"/>
    <property type="match status" value="1"/>
</dbReference>
<dbReference type="PRINTS" id="PR00982">
    <property type="entry name" value="TRNASYNTHLYS"/>
</dbReference>
<dbReference type="SUPFAM" id="SSF55681">
    <property type="entry name" value="Class II aaRS and biotin synthetases"/>
    <property type="match status" value="1"/>
</dbReference>
<dbReference type="SUPFAM" id="SSF50249">
    <property type="entry name" value="Nucleic acid-binding proteins"/>
    <property type="match status" value="1"/>
</dbReference>
<dbReference type="PROSITE" id="PS50862">
    <property type="entry name" value="AA_TRNA_LIGASE_II"/>
    <property type="match status" value="1"/>
</dbReference>
<proteinExistence type="inferred from homology"/>
<gene>
    <name evidence="1" type="primary">lysS</name>
    <name type="ordered locus">CGSHiEE_05980</name>
</gene>
<accession>A5UCQ0</accession>
<organism>
    <name type="scientific">Haemophilus influenzae (strain PittEE)</name>
    <dbReference type="NCBI Taxonomy" id="374930"/>
    <lineage>
        <taxon>Bacteria</taxon>
        <taxon>Pseudomonadati</taxon>
        <taxon>Pseudomonadota</taxon>
        <taxon>Gammaproteobacteria</taxon>
        <taxon>Pasteurellales</taxon>
        <taxon>Pasteurellaceae</taxon>
        <taxon>Haemophilus</taxon>
    </lineage>
</organism>
<feature type="chain" id="PRO_1000101118" description="Lysine--tRNA ligase">
    <location>
        <begin position="1"/>
        <end position="502"/>
    </location>
</feature>
<feature type="binding site" evidence="1">
    <location>
        <position position="413"/>
    </location>
    <ligand>
        <name>Mg(2+)</name>
        <dbReference type="ChEBI" id="CHEBI:18420"/>
        <label>1</label>
    </ligand>
</feature>
<feature type="binding site" evidence="1">
    <location>
        <position position="420"/>
    </location>
    <ligand>
        <name>Mg(2+)</name>
        <dbReference type="ChEBI" id="CHEBI:18420"/>
        <label>1</label>
    </ligand>
</feature>
<feature type="binding site" evidence="1">
    <location>
        <position position="420"/>
    </location>
    <ligand>
        <name>Mg(2+)</name>
        <dbReference type="ChEBI" id="CHEBI:18420"/>
        <label>2</label>
    </ligand>
</feature>
<keyword id="KW-0030">Aminoacyl-tRNA synthetase</keyword>
<keyword id="KW-0067">ATP-binding</keyword>
<keyword id="KW-0963">Cytoplasm</keyword>
<keyword id="KW-0436">Ligase</keyword>
<keyword id="KW-0460">Magnesium</keyword>
<keyword id="KW-0479">Metal-binding</keyword>
<keyword id="KW-0547">Nucleotide-binding</keyword>
<keyword id="KW-0648">Protein biosynthesis</keyword>
<name>SYK_HAEIE</name>
<protein>
    <recommendedName>
        <fullName evidence="1">Lysine--tRNA ligase</fullName>
        <ecNumber evidence="1">6.1.1.6</ecNumber>
    </recommendedName>
    <alternativeName>
        <fullName evidence="1">Lysyl-tRNA synthetase</fullName>
        <shortName evidence="1">LysRS</shortName>
    </alternativeName>
</protein>